<evidence type="ECO:0000255" key="1">
    <source>
        <dbReference type="HAMAP-Rule" id="MF_01152"/>
    </source>
</evidence>
<reference key="1">
    <citation type="journal article" date="2003" name="Genome Res.">
        <title>Comparative complete genome sequence analysis of the amino acid replacements responsible for the thermostability of Corynebacterium efficiens.</title>
        <authorList>
            <person name="Nishio Y."/>
            <person name="Nakamura Y."/>
            <person name="Kawarabayasi Y."/>
            <person name="Usuda Y."/>
            <person name="Kimura E."/>
            <person name="Sugimoto S."/>
            <person name="Matsui K."/>
            <person name="Yamagishi A."/>
            <person name="Kikuchi H."/>
            <person name="Ikeo K."/>
            <person name="Gojobori T."/>
        </authorList>
    </citation>
    <scope>NUCLEOTIDE SEQUENCE [LARGE SCALE GENOMIC DNA]</scope>
    <source>
        <strain>DSM 44549 / YS-314 / AJ 12310 / JCM 11189 / NBRC 100395</strain>
    </source>
</reference>
<sequence length="378" mass="40630">MARDYYGILGVDRNATDSEIKKAYRKLARKYHPDVNPSEEAAEKFREASVAHEVLTDPDKRRIVDMGGDPMEQGGGAGHPGGFGSGGLGDIFDAFFGGGAGSRGPRSRVQPGSDTLWRTSITLEEAFTGVKKDLTLDTAVLCSKCHGSGSASNAKPKTCGTCHGSGEIQEVQRSFLGNVMTSRPCHTCNGTGEVIPDPCDECAGDGRVRARRDIVADIPAGIQSGMRIRMAGQGEVGAGGGPAGDLYVEVMVRPHAVFTRDGDDLHASIRVPMIDAALGSELEVESLTGEEITVVIPAGTQPNQVITLEGEGMPRLRAEGRGDLMAHVDLFVPTEIDDRTRELLEQIRDYRRDNSSVHREGEEHGGLFDKLKSKFRNR</sequence>
<keyword id="KW-0143">Chaperone</keyword>
<keyword id="KW-0963">Cytoplasm</keyword>
<keyword id="KW-0235">DNA replication</keyword>
<keyword id="KW-0479">Metal-binding</keyword>
<keyword id="KW-1185">Reference proteome</keyword>
<keyword id="KW-0677">Repeat</keyword>
<keyword id="KW-0346">Stress response</keyword>
<keyword id="KW-0862">Zinc</keyword>
<keyword id="KW-0863">Zinc-finger</keyword>
<comment type="function">
    <text evidence="1">Participates actively in the response to hyperosmotic and heat shock by preventing the aggregation of stress-denatured proteins and by disaggregating proteins, also in an autonomous, DnaK-independent fashion. Unfolded proteins bind initially to DnaJ; upon interaction with the DnaJ-bound protein, DnaK hydrolyzes its bound ATP, resulting in the formation of a stable complex. GrpE releases ADP from DnaK; ATP binding to DnaK triggers the release of the substrate protein, thus completing the reaction cycle. Several rounds of ATP-dependent interactions between DnaJ, DnaK and GrpE are required for fully efficient folding. Also involved, together with DnaK and GrpE, in the DNA replication of plasmids through activation of initiation proteins.</text>
</comment>
<comment type="cofactor">
    <cofactor evidence="1">
        <name>Zn(2+)</name>
        <dbReference type="ChEBI" id="CHEBI:29105"/>
    </cofactor>
    <text evidence="1">Binds 2 Zn(2+) ions per monomer.</text>
</comment>
<comment type="subunit">
    <text evidence="1">Homodimer.</text>
</comment>
<comment type="subcellular location">
    <subcellularLocation>
        <location evidence="1">Cytoplasm</location>
    </subcellularLocation>
</comment>
<comment type="domain">
    <text evidence="1">The J domain is necessary and sufficient to stimulate DnaK ATPase activity. Zinc center 1 plays an important role in the autonomous, DnaK-independent chaperone activity of DnaJ. Zinc center 2 is essential for interaction with DnaK and for DnaJ activity.</text>
</comment>
<comment type="similarity">
    <text evidence="1">Belongs to the DnaJ family.</text>
</comment>
<proteinExistence type="inferred from homology"/>
<accession>Q8FNF5</accession>
<gene>
    <name evidence="1" type="primary">dnaJ1</name>
    <name type="ordered locus">CE2189</name>
</gene>
<feature type="chain" id="PRO_0000070768" description="Chaperone protein DnaJ 1">
    <location>
        <begin position="1"/>
        <end position="378"/>
    </location>
</feature>
<feature type="domain" description="J" evidence="1">
    <location>
        <begin position="4"/>
        <end position="68"/>
    </location>
</feature>
<feature type="repeat" description="CXXCXGXG motif">
    <location>
        <begin position="142"/>
        <end position="149"/>
    </location>
</feature>
<feature type="repeat" description="CXXCXGXG motif">
    <location>
        <begin position="159"/>
        <end position="166"/>
    </location>
</feature>
<feature type="repeat" description="CXXCXGXG motif">
    <location>
        <begin position="185"/>
        <end position="192"/>
    </location>
</feature>
<feature type="repeat" description="CXXCXGXG motif">
    <location>
        <begin position="199"/>
        <end position="206"/>
    </location>
</feature>
<feature type="zinc finger region" description="CR-type" evidence="1">
    <location>
        <begin position="129"/>
        <end position="211"/>
    </location>
</feature>
<feature type="binding site" evidence="1">
    <location>
        <position position="142"/>
    </location>
    <ligand>
        <name>Zn(2+)</name>
        <dbReference type="ChEBI" id="CHEBI:29105"/>
        <label>1</label>
    </ligand>
</feature>
<feature type="binding site" evidence="1">
    <location>
        <position position="145"/>
    </location>
    <ligand>
        <name>Zn(2+)</name>
        <dbReference type="ChEBI" id="CHEBI:29105"/>
        <label>1</label>
    </ligand>
</feature>
<feature type="binding site" evidence="1">
    <location>
        <position position="159"/>
    </location>
    <ligand>
        <name>Zn(2+)</name>
        <dbReference type="ChEBI" id="CHEBI:29105"/>
        <label>2</label>
    </ligand>
</feature>
<feature type="binding site" evidence="1">
    <location>
        <position position="162"/>
    </location>
    <ligand>
        <name>Zn(2+)</name>
        <dbReference type="ChEBI" id="CHEBI:29105"/>
        <label>2</label>
    </ligand>
</feature>
<feature type="binding site" evidence="1">
    <location>
        <position position="185"/>
    </location>
    <ligand>
        <name>Zn(2+)</name>
        <dbReference type="ChEBI" id="CHEBI:29105"/>
        <label>2</label>
    </ligand>
</feature>
<feature type="binding site" evidence="1">
    <location>
        <position position="188"/>
    </location>
    <ligand>
        <name>Zn(2+)</name>
        <dbReference type="ChEBI" id="CHEBI:29105"/>
        <label>2</label>
    </ligand>
</feature>
<feature type="binding site" evidence="1">
    <location>
        <position position="199"/>
    </location>
    <ligand>
        <name>Zn(2+)</name>
        <dbReference type="ChEBI" id="CHEBI:29105"/>
        <label>1</label>
    </ligand>
</feature>
<feature type="binding site" evidence="1">
    <location>
        <position position="202"/>
    </location>
    <ligand>
        <name>Zn(2+)</name>
        <dbReference type="ChEBI" id="CHEBI:29105"/>
        <label>1</label>
    </ligand>
</feature>
<protein>
    <recommendedName>
        <fullName evidence="1">Chaperone protein DnaJ 1</fullName>
    </recommendedName>
</protein>
<dbReference type="EMBL" id="BA000035">
    <property type="protein sequence ID" value="BAC18999.1"/>
    <property type="molecule type" value="Genomic_DNA"/>
</dbReference>
<dbReference type="RefSeq" id="WP_006768192.1">
    <property type="nucleotide sequence ID" value="NC_004369.1"/>
</dbReference>
<dbReference type="SMR" id="Q8FNF5"/>
<dbReference type="STRING" id="196164.gene:10742620"/>
<dbReference type="KEGG" id="cef:CE2189"/>
<dbReference type="eggNOG" id="COG0484">
    <property type="taxonomic scope" value="Bacteria"/>
</dbReference>
<dbReference type="HOGENOM" id="CLU_017633_0_7_11"/>
<dbReference type="OrthoDB" id="9779889at2"/>
<dbReference type="Proteomes" id="UP000001409">
    <property type="component" value="Chromosome"/>
</dbReference>
<dbReference type="GO" id="GO:0005737">
    <property type="term" value="C:cytoplasm"/>
    <property type="evidence" value="ECO:0007669"/>
    <property type="project" value="UniProtKB-SubCell"/>
</dbReference>
<dbReference type="GO" id="GO:0005524">
    <property type="term" value="F:ATP binding"/>
    <property type="evidence" value="ECO:0007669"/>
    <property type="project" value="InterPro"/>
</dbReference>
<dbReference type="GO" id="GO:0031072">
    <property type="term" value="F:heat shock protein binding"/>
    <property type="evidence" value="ECO:0007669"/>
    <property type="project" value="InterPro"/>
</dbReference>
<dbReference type="GO" id="GO:0051082">
    <property type="term" value="F:unfolded protein binding"/>
    <property type="evidence" value="ECO:0007669"/>
    <property type="project" value="UniProtKB-UniRule"/>
</dbReference>
<dbReference type="GO" id="GO:0008270">
    <property type="term" value="F:zinc ion binding"/>
    <property type="evidence" value="ECO:0007669"/>
    <property type="project" value="UniProtKB-UniRule"/>
</dbReference>
<dbReference type="GO" id="GO:0051085">
    <property type="term" value="P:chaperone cofactor-dependent protein refolding"/>
    <property type="evidence" value="ECO:0007669"/>
    <property type="project" value="TreeGrafter"/>
</dbReference>
<dbReference type="GO" id="GO:0006260">
    <property type="term" value="P:DNA replication"/>
    <property type="evidence" value="ECO:0007669"/>
    <property type="project" value="UniProtKB-KW"/>
</dbReference>
<dbReference type="GO" id="GO:0042026">
    <property type="term" value="P:protein refolding"/>
    <property type="evidence" value="ECO:0007669"/>
    <property type="project" value="TreeGrafter"/>
</dbReference>
<dbReference type="GO" id="GO:0009408">
    <property type="term" value="P:response to heat"/>
    <property type="evidence" value="ECO:0007669"/>
    <property type="project" value="InterPro"/>
</dbReference>
<dbReference type="CDD" id="cd06257">
    <property type="entry name" value="DnaJ"/>
    <property type="match status" value="1"/>
</dbReference>
<dbReference type="CDD" id="cd10747">
    <property type="entry name" value="DnaJ_C"/>
    <property type="match status" value="1"/>
</dbReference>
<dbReference type="CDD" id="cd10719">
    <property type="entry name" value="DnaJ_zf"/>
    <property type="match status" value="1"/>
</dbReference>
<dbReference type="FunFam" id="2.60.260.20:FF:000005">
    <property type="entry name" value="Chaperone protein dnaJ 1, mitochondrial"/>
    <property type="match status" value="1"/>
</dbReference>
<dbReference type="FunFam" id="2.10.230.10:FF:000002">
    <property type="entry name" value="Molecular chaperone DnaJ"/>
    <property type="match status" value="1"/>
</dbReference>
<dbReference type="Gene3D" id="6.20.20.10">
    <property type="match status" value="2"/>
</dbReference>
<dbReference type="Gene3D" id="1.10.287.110">
    <property type="entry name" value="DnaJ domain"/>
    <property type="match status" value="1"/>
</dbReference>
<dbReference type="Gene3D" id="2.60.260.20">
    <property type="entry name" value="Urease metallochaperone UreE, N-terminal domain"/>
    <property type="match status" value="2"/>
</dbReference>
<dbReference type="HAMAP" id="MF_01152">
    <property type="entry name" value="DnaJ"/>
    <property type="match status" value="1"/>
</dbReference>
<dbReference type="InterPro" id="IPR012724">
    <property type="entry name" value="DnaJ"/>
</dbReference>
<dbReference type="InterPro" id="IPR002939">
    <property type="entry name" value="DnaJ_C"/>
</dbReference>
<dbReference type="InterPro" id="IPR001623">
    <property type="entry name" value="DnaJ_domain"/>
</dbReference>
<dbReference type="InterPro" id="IPR008971">
    <property type="entry name" value="HSP40/DnaJ_pept-bd"/>
</dbReference>
<dbReference type="InterPro" id="IPR001305">
    <property type="entry name" value="HSP_DnaJ_Cys-rich_dom"/>
</dbReference>
<dbReference type="InterPro" id="IPR036410">
    <property type="entry name" value="HSP_DnaJ_Cys-rich_dom_sf"/>
</dbReference>
<dbReference type="InterPro" id="IPR036869">
    <property type="entry name" value="J_dom_sf"/>
</dbReference>
<dbReference type="NCBIfam" id="TIGR02349">
    <property type="entry name" value="DnaJ_bact"/>
    <property type="match status" value="1"/>
</dbReference>
<dbReference type="NCBIfam" id="NF008035">
    <property type="entry name" value="PRK10767.1"/>
    <property type="match status" value="1"/>
</dbReference>
<dbReference type="NCBIfam" id="NF010871">
    <property type="entry name" value="PRK14278.1"/>
    <property type="match status" value="1"/>
</dbReference>
<dbReference type="PANTHER" id="PTHR43096:SF48">
    <property type="entry name" value="CHAPERONE PROTEIN DNAJ"/>
    <property type="match status" value="1"/>
</dbReference>
<dbReference type="PANTHER" id="PTHR43096">
    <property type="entry name" value="DNAJ HOMOLOG 1, MITOCHONDRIAL-RELATED"/>
    <property type="match status" value="1"/>
</dbReference>
<dbReference type="Pfam" id="PF00226">
    <property type="entry name" value="DnaJ"/>
    <property type="match status" value="1"/>
</dbReference>
<dbReference type="Pfam" id="PF01556">
    <property type="entry name" value="DnaJ_C"/>
    <property type="match status" value="1"/>
</dbReference>
<dbReference type="Pfam" id="PF00684">
    <property type="entry name" value="DnaJ_CXXCXGXG"/>
    <property type="match status" value="1"/>
</dbReference>
<dbReference type="PRINTS" id="PR00625">
    <property type="entry name" value="JDOMAIN"/>
</dbReference>
<dbReference type="SMART" id="SM00271">
    <property type="entry name" value="DnaJ"/>
    <property type="match status" value="1"/>
</dbReference>
<dbReference type="SUPFAM" id="SSF46565">
    <property type="entry name" value="Chaperone J-domain"/>
    <property type="match status" value="1"/>
</dbReference>
<dbReference type="SUPFAM" id="SSF57938">
    <property type="entry name" value="DnaJ/Hsp40 cysteine-rich domain"/>
    <property type="match status" value="1"/>
</dbReference>
<dbReference type="SUPFAM" id="SSF49493">
    <property type="entry name" value="HSP40/DnaJ peptide-binding domain"/>
    <property type="match status" value="2"/>
</dbReference>
<dbReference type="PROSITE" id="PS50076">
    <property type="entry name" value="DNAJ_2"/>
    <property type="match status" value="1"/>
</dbReference>
<dbReference type="PROSITE" id="PS51188">
    <property type="entry name" value="ZF_CR"/>
    <property type="match status" value="1"/>
</dbReference>
<name>DNAJ1_COREF</name>
<organism>
    <name type="scientific">Corynebacterium efficiens (strain DSM 44549 / YS-314 / AJ 12310 / JCM 11189 / NBRC 100395)</name>
    <dbReference type="NCBI Taxonomy" id="196164"/>
    <lineage>
        <taxon>Bacteria</taxon>
        <taxon>Bacillati</taxon>
        <taxon>Actinomycetota</taxon>
        <taxon>Actinomycetes</taxon>
        <taxon>Mycobacteriales</taxon>
        <taxon>Corynebacteriaceae</taxon>
        <taxon>Corynebacterium</taxon>
    </lineage>
</organism>